<reference key="1">
    <citation type="submission" date="2001-04" db="EMBL/GenBank/DDBJ databases">
        <title>Isolation of full-length cDNA clones from macaque brain cDNA libraries.</title>
        <authorList>
            <person name="Osada N."/>
            <person name="Hida M."/>
            <person name="Kusuda J."/>
            <person name="Tanuma R."/>
            <person name="Iseki K."/>
            <person name="Hirai M."/>
            <person name="Terao K."/>
            <person name="Suzuki Y."/>
            <person name="Sugano S."/>
            <person name="Hashimoto K."/>
        </authorList>
    </citation>
    <scope>NUCLEOTIDE SEQUENCE [LARGE SCALE MRNA]</scope>
    <source>
        <tissue>Brain cortex</tissue>
        <tissue>Temporal cortex</tissue>
    </source>
</reference>
<keyword id="KW-0968">Cytoplasmic vesicle</keyword>
<keyword id="KW-0967">Endosome</keyword>
<keyword id="KW-0333">Golgi apparatus</keyword>
<keyword id="KW-0446">Lipid-binding</keyword>
<keyword id="KW-0472">Membrane</keyword>
<keyword id="KW-0597">Phosphoprotein</keyword>
<keyword id="KW-1185">Reference proteome</keyword>
<proteinExistence type="evidence at transcript level"/>
<sequence>MTHLQAGLSPETLEKARLELNENPDTLHQDIQEVRDMVITRPDIGFLRTDDAFILRFLRARKFHHFEAFRLLAQYFEYRQQNLDMFKSFKATDPGIKQALKDGFPGGLANLDHYGRKILVLFAANWDQSRYTLVDILRAILLSLEAMIEDPELQVNGFVLIIDWSNFTFKQASKLTPSMLRLAIEGLQDSFPARFGGIHFVNQPWYIHALYTVIRPFLKEKTRKRIFLHGNNLNSLHQLIHPEILPSEFGGMLPPYDMGTWARTLLDHEYDDDSEYNVDSYSMPVKEVEKELSPKSMKRSQSVVDPTVLKRMDKNEEENMQPLLSLD</sequence>
<gene>
    <name type="primary">CLVS2</name>
    <name type="synonym">RLBP1L2</name>
    <name type="ORF">QccE-21404</name>
    <name type="ORF">QtrA-13887</name>
</gene>
<accession>Q95KF7</accession>
<accession>Q9BE37</accession>
<feature type="chain" id="PRO_0000297652" description="Clavesin-2">
    <location>
        <begin position="1"/>
        <end position="327"/>
    </location>
</feature>
<feature type="domain" description="CRAL-TRIO" evidence="3">
    <location>
        <begin position="96"/>
        <end position="257"/>
    </location>
</feature>
<feature type="region of interest" description="Disordered" evidence="4">
    <location>
        <begin position="287"/>
        <end position="327"/>
    </location>
</feature>
<feature type="modified residue" description="Phosphoserine" evidence="2">
    <location>
        <position position="325"/>
    </location>
</feature>
<feature type="sequence conflict" description="In Ref. 1; BAB46902." evidence="5" ref="1">
    <original>K</original>
    <variation>R</variation>
    <location>
        <position position="101"/>
    </location>
</feature>
<feature type="sequence conflict" description="In Ref. 1; BAB41140." evidence="5" ref="1">
    <original>I</original>
    <variation>T</variation>
    <location>
        <position position="198"/>
    </location>
</feature>
<feature type="sequence conflict" description="In Ref. 1; BAB41140." evidence="5" ref="1">
    <original>H</original>
    <variation>R</variation>
    <location>
        <position position="241"/>
    </location>
</feature>
<comment type="function">
    <text evidence="1">Required for normal morphology of late endosomes and/or lysosomes in neurons. Binds phosphatidylinositol 3,5-bisphosphate (PtdIns(3,5)P2) (By similarity).</text>
</comment>
<comment type="subunit">
    <text evidence="1">Forms a complex with clathrin heavy chain and gamma-adaptin.</text>
</comment>
<comment type="subcellular location">
    <subcellularLocation>
        <location evidence="1">Golgi apparatus</location>
        <location evidence="1">trans-Golgi network membrane</location>
        <topology evidence="1">Peripheral membrane protein</topology>
    </subcellularLocation>
    <subcellularLocation>
        <location evidence="1">Early endosome membrane</location>
        <topology evidence="1">Peripheral membrane protein</topology>
    </subcellularLocation>
    <subcellularLocation>
        <location evidence="1">Cytoplasmic vesicle</location>
        <location evidence="1">Clathrin-coated vesicle</location>
    </subcellularLocation>
</comment>
<comment type="domain">
    <text evidence="1">The CRAL-TRIO domain is required for targeting to the membrane and for binding PtdIns(3,5)P2.</text>
</comment>
<comment type="miscellaneous">
    <text evidence="1">Binding to PtdIns(3,5)P2 is not required for localization.</text>
</comment>
<protein>
    <recommendedName>
        <fullName>Clavesin-2</fullName>
    </recommendedName>
    <alternativeName>
        <fullName>Retinaldehyde-binding protein 1-like 2</fullName>
    </alternativeName>
</protein>
<organism>
    <name type="scientific">Macaca fascicularis</name>
    <name type="common">Crab-eating macaque</name>
    <name type="synonym">Cynomolgus monkey</name>
    <dbReference type="NCBI Taxonomy" id="9541"/>
    <lineage>
        <taxon>Eukaryota</taxon>
        <taxon>Metazoa</taxon>
        <taxon>Chordata</taxon>
        <taxon>Craniata</taxon>
        <taxon>Vertebrata</taxon>
        <taxon>Euteleostomi</taxon>
        <taxon>Mammalia</taxon>
        <taxon>Eutheria</taxon>
        <taxon>Euarchontoglires</taxon>
        <taxon>Primates</taxon>
        <taxon>Haplorrhini</taxon>
        <taxon>Catarrhini</taxon>
        <taxon>Cercopithecidae</taxon>
        <taxon>Cercopithecinae</taxon>
        <taxon>Macaca</taxon>
    </lineage>
</organism>
<name>CLVS2_MACFA</name>
<evidence type="ECO:0000250" key="1"/>
<evidence type="ECO:0000250" key="2">
    <source>
        <dbReference type="UniProtKB" id="A6JUQ6"/>
    </source>
</evidence>
<evidence type="ECO:0000255" key="3">
    <source>
        <dbReference type="PROSITE-ProRule" id="PRU00056"/>
    </source>
</evidence>
<evidence type="ECO:0000256" key="4">
    <source>
        <dbReference type="SAM" id="MobiDB-lite"/>
    </source>
</evidence>
<evidence type="ECO:0000305" key="5"/>
<dbReference type="EMBL" id="AB060190">
    <property type="protein sequence ID" value="BAB41140.1"/>
    <property type="molecule type" value="mRNA"/>
</dbReference>
<dbReference type="EMBL" id="AB060902">
    <property type="protein sequence ID" value="BAB46902.1"/>
    <property type="molecule type" value="mRNA"/>
</dbReference>
<dbReference type="RefSeq" id="NP_001306321.1">
    <property type="nucleotide sequence ID" value="NM_001319392.1"/>
</dbReference>
<dbReference type="RefSeq" id="XP_005551772.1">
    <property type="nucleotide sequence ID" value="XM_005551715.4"/>
</dbReference>
<dbReference type="SMR" id="Q95KF7"/>
<dbReference type="STRING" id="9541.ENSMFAP00000033574"/>
<dbReference type="Ensembl" id="ENSMFAT00000007802.2">
    <property type="protein sequence ID" value="ENSMFAP00000033574.1"/>
    <property type="gene ID" value="ENSMFAG00000003285.2"/>
</dbReference>
<dbReference type="GeneID" id="102115352"/>
<dbReference type="KEGG" id="mcf:102115352"/>
<dbReference type="CTD" id="134829"/>
<dbReference type="VEuPathDB" id="HostDB:ENSMFAG00000003285"/>
<dbReference type="eggNOG" id="KOG1471">
    <property type="taxonomic scope" value="Eukaryota"/>
</dbReference>
<dbReference type="GeneTree" id="ENSGT00940000157632"/>
<dbReference type="OMA" id="DEEPDYC"/>
<dbReference type="OrthoDB" id="1769at314294"/>
<dbReference type="Proteomes" id="UP000233100">
    <property type="component" value="Chromosome 4"/>
</dbReference>
<dbReference type="Bgee" id="ENSMFAG00000003285">
    <property type="expression patterns" value="Expressed in cerebellum and 3 other cell types or tissues"/>
</dbReference>
<dbReference type="GO" id="GO:0030136">
    <property type="term" value="C:clathrin-coated vesicle"/>
    <property type="evidence" value="ECO:0000250"/>
    <property type="project" value="UniProtKB"/>
</dbReference>
<dbReference type="GO" id="GO:0031901">
    <property type="term" value="C:early endosome membrane"/>
    <property type="evidence" value="ECO:0007669"/>
    <property type="project" value="UniProtKB-SubCell"/>
</dbReference>
<dbReference type="GO" id="GO:0005768">
    <property type="term" value="C:endosome"/>
    <property type="evidence" value="ECO:0000250"/>
    <property type="project" value="UniProtKB"/>
</dbReference>
<dbReference type="GO" id="GO:0005802">
    <property type="term" value="C:trans-Golgi network"/>
    <property type="evidence" value="ECO:0000250"/>
    <property type="project" value="UniProtKB"/>
</dbReference>
<dbReference type="GO" id="GO:0080025">
    <property type="term" value="F:phosphatidylinositol-3,5-bisphosphate binding"/>
    <property type="evidence" value="ECO:0000250"/>
    <property type="project" value="UniProtKB"/>
</dbReference>
<dbReference type="GO" id="GO:0007040">
    <property type="term" value="P:lysosome organization"/>
    <property type="evidence" value="ECO:0000250"/>
    <property type="project" value="UniProtKB"/>
</dbReference>
<dbReference type="CDD" id="cd00170">
    <property type="entry name" value="SEC14"/>
    <property type="match status" value="1"/>
</dbReference>
<dbReference type="FunFam" id="1.10.8.20:FF:000001">
    <property type="entry name" value="Alpha-tocopherol transfer protein-like"/>
    <property type="match status" value="1"/>
</dbReference>
<dbReference type="FunFam" id="3.40.525.10:FF:000002">
    <property type="entry name" value="Alpha-tocopherol transfer protein-like"/>
    <property type="match status" value="1"/>
</dbReference>
<dbReference type="FunFam" id="1.20.5.1200:FF:000001">
    <property type="entry name" value="Clavesin 2"/>
    <property type="match status" value="1"/>
</dbReference>
<dbReference type="Gene3D" id="1.20.5.1200">
    <property type="entry name" value="Alpha-tocopherol transfer"/>
    <property type="match status" value="1"/>
</dbReference>
<dbReference type="Gene3D" id="3.40.525.10">
    <property type="entry name" value="CRAL-TRIO lipid binding domain"/>
    <property type="match status" value="1"/>
</dbReference>
<dbReference type="Gene3D" id="1.10.8.20">
    <property type="entry name" value="N-terminal domain of phosphatidylinositol transfer protein sec14p"/>
    <property type="match status" value="1"/>
</dbReference>
<dbReference type="InterPro" id="IPR001251">
    <property type="entry name" value="CRAL-TRIO_dom"/>
</dbReference>
<dbReference type="InterPro" id="IPR036865">
    <property type="entry name" value="CRAL-TRIO_dom_sf"/>
</dbReference>
<dbReference type="InterPro" id="IPR011074">
    <property type="entry name" value="CRAL/TRIO_N_dom"/>
</dbReference>
<dbReference type="InterPro" id="IPR036273">
    <property type="entry name" value="CRAL/TRIO_N_dom_sf"/>
</dbReference>
<dbReference type="PANTHER" id="PTHR10174">
    <property type="entry name" value="ALPHA-TOCOPHEROL TRANSFER PROTEIN-RELATED"/>
    <property type="match status" value="1"/>
</dbReference>
<dbReference type="PANTHER" id="PTHR10174:SF73">
    <property type="entry name" value="CLAVESIN-2"/>
    <property type="match status" value="1"/>
</dbReference>
<dbReference type="Pfam" id="PF00650">
    <property type="entry name" value="CRAL_TRIO"/>
    <property type="match status" value="1"/>
</dbReference>
<dbReference type="Pfam" id="PF03765">
    <property type="entry name" value="CRAL_TRIO_N"/>
    <property type="match status" value="1"/>
</dbReference>
<dbReference type="PRINTS" id="PR00180">
    <property type="entry name" value="CRETINALDHBP"/>
</dbReference>
<dbReference type="SMART" id="SM01100">
    <property type="entry name" value="CRAL_TRIO_N"/>
    <property type="match status" value="1"/>
</dbReference>
<dbReference type="SMART" id="SM00516">
    <property type="entry name" value="SEC14"/>
    <property type="match status" value="1"/>
</dbReference>
<dbReference type="SUPFAM" id="SSF52087">
    <property type="entry name" value="CRAL/TRIO domain"/>
    <property type="match status" value="1"/>
</dbReference>
<dbReference type="SUPFAM" id="SSF46938">
    <property type="entry name" value="CRAL/TRIO N-terminal domain"/>
    <property type="match status" value="1"/>
</dbReference>
<dbReference type="PROSITE" id="PS50191">
    <property type="entry name" value="CRAL_TRIO"/>
    <property type="match status" value="1"/>
</dbReference>